<accession>A0QSD6</accession>
<accession>I7FGB4</accession>
<gene>
    <name evidence="1" type="primary">rplV</name>
    <name type="ordered locus">MSMEG_1441</name>
    <name type="ordered locus">MSMEI_1405</name>
</gene>
<dbReference type="EMBL" id="CP000480">
    <property type="protein sequence ID" value="ABK71298.1"/>
    <property type="molecule type" value="Genomic_DNA"/>
</dbReference>
<dbReference type="EMBL" id="CP001663">
    <property type="protein sequence ID" value="AFP37878.1"/>
    <property type="molecule type" value="Genomic_DNA"/>
</dbReference>
<dbReference type="RefSeq" id="WP_011727673.1">
    <property type="nucleotide sequence ID" value="NZ_SIJM01000016.1"/>
</dbReference>
<dbReference type="RefSeq" id="YP_885824.1">
    <property type="nucleotide sequence ID" value="NC_008596.1"/>
</dbReference>
<dbReference type="PDB" id="5O60">
    <property type="method" value="EM"/>
    <property type="resolution" value="3.20 A"/>
    <property type="chains" value="T=1-153"/>
</dbReference>
<dbReference type="PDB" id="5O61">
    <property type="method" value="EM"/>
    <property type="resolution" value="3.31 A"/>
    <property type="chains" value="T=1-153"/>
</dbReference>
<dbReference type="PDB" id="5XYM">
    <property type="method" value="EM"/>
    <property type="resolution" value="3.08 A"/>
    <property type="chains" value="S=1-153"/>
</dbReference>
<dbReference type="PDB" id="5ZEB">
    <property type="method" value="EM"/>
    <property type="resolution" value="3.40 A"/>
    <property type="chains" value="T=1-153"/>
</dbReference>
<dbReference type="PDB" id="5ZEP">
    <property type="method" value="EM"/>
    <property type="resolution" value="3.40 A"/>
    <property type="chains" value="T=1-153"/>
</dbReference>
<dbReference type="PDB" id="5ZET">
    <property type="method" value="EM"/>
    <property type="resolution" value="3.20 A"/>
    <property type="chains" value="T=1-153"/>
</dbReference>
<dbReference type="PDB" id="6DZI">
    <property type="method" value="EM"/>
    <property type="resolution" value="3.46 A"/>
    <property type="chains" value="T=6-119"/>
</dbReference>
<dbReference type="PDB" id="6DZP">
    <property type="method" value="EM"/>
    <property type="resolution" value="3.42 A"/>
    <property type="chains" value="T=2-153"/>
</dbReference>
<dbReference type="PDB" id="7XAM">
    <property type="method" value="EM"/>
    <property type="resolution" value="2.80 A"/>
    <property type="chains" value="T=1-153"/>
</dbReference>
<dbReference type="PDB" id="7Y41">
    <property type="method" value="EM"/>
    <property type="resolution" value="4.10 A"/>
    <property type="chains" value="T=1-153"/>
</dbReference>
<dbReference type="PDB" id="8FR8">
    <property type="method" value="EM"/>
    <property type="resolution" value="2.76 A"/>
    <property type="chains" value="Y=6-119"/>
</dbReference>
<dbReference type="PDB" id="8KAB">
    <property type="method" value="EM"/>
    <property type="resolution" value="3.30 A"/>
    <property type="chains" value="T=1-153"/>
</dbReference>
<dbReference type="PDB" id="8V9J">
    <property type="method" value="EM"/>
    <property type="resolution" value="3.10 A"/>
    <property type="chains" value="U=1-153"/>
</dbReference>
<dbReference type="PDB" id="8V9K">
    <property type="method" value="EM"/>
    <property type="resolution" value="3.10 A"/>
    <property type="chains" value="U=1-153"/>
</dbReference>
<dbReference type="PDB" id="8V9L">
    <property type="method" value="EM"/>
    <property type="resolution" value="3.00 A"/>
    <property type="chains" value="U=1-153"/>
</dbReference>
<dbReference type="PDB" id="8VIO">
    <property type="method" value="EM"/>
    <property type="resolution" value="3.26 A"/>
    <property type="chains" value="T=1-153"/>
</dbReference>
<dbReference type="PDB" id="8VK0">
    <property type="method" value="EM"/>
    <property type="resolution" value="3.14 A"/>
    <property type="chains" value="T=1-153"/>
</dbReference>
<dbReference type="PDB" id="8VK7">
    <property type="method" value="EM"/>
    <property type="resolution" value="3.09 A"/>
    <property type="chains" value="T=1-153"/>
</dbReference>
<dbReference type="PDB" id="8VKI">
    <property type="method" value="EM"/>
    <property type="resolution" value="2.96 A"/>
    <property type="chains" value="T=1-153"/>
</dbReference>
<dbReference type="PDB" id="8VKW">
    <property type="method" value="EM"/>
    <property type="resolution" value="3.44 A"/>
    <property type="chains" value="T=1-153"/>
</dbReference>
<dbReference type="PDB" id="8VR4">
    <property type="method" value="EM"/>
    <property type="resolution" value="2.80 A"/>
    <property type="chains" value="T=1-153"/>
</dbReference>
<dbReference type="PDB" id="8VR8">
    <property type="method" value="EM"/>
    <property type="resolution" value="3.25 A"/>
    <property type="chains" value="T=1-153"/>
</dbReference>
<dbReference type="PDB" id="8VRL">
    <property type="method" value="EM"/>
    <property type="resolution" value="3.33 A"/>
    <property type="chains" value="T=1-153"/>
</dbReference>
<dbReference type="PDB" id="8WHX">
    <property type="method" value="EM"/>
    <property type="resolution" value="2.80 A"/>
    <property type="chains" value="V=1-153"/>
</dbReference>
<dbReference type="PDB" id="8WHY">
    <property type="method" value="EM"/>
    <property type="resolution" value="2.70 A"/>
    <property type="chains" value="V=1-153"/>
</dbReference>
<dbReference type="PDB" id="8WI7">
    <property type="method" value="EM"/>
    <property type="resolution" value="3.50 A"/>
    <property type="chains" value="V=1-153"/>
</dbReference>
<dbReference type="PDB" id="8WI8">
    <property type="method" value="EM"/>
    <property type="resolution" value="2.70 A"/>
    <property type="chains" value="V=1-153"/>
</dbReference>
<dbReference type="PDB" id="8WIB">
    <property type="method" value="EM"/>
    <property type="resolution" value="3.50 A"/>
    <property type="chains" value="V=1-153"/>
</dbReference>
<dbReference type="PDB" id="8WIC">
    <property type="method" value="EM"/>
    <property type="resolution" value="3.50 A"/>
    <property type="chains" value="V=1-153"/>
</dbReference>
<dbReference type="PDB" id="8XZ3">
    <property type="method" value="EM"/>
    <property type="resolution" value="3.60 A"/>
    <property type="chains" value="T=6-119"/>
</dbReference>
<dbReference type="PDBsum" id="5O60"/>
<dbReference type="PDBsum" id="5O61"/>
<dbReference type="PDBsum" id="5XYM"/>
<dbReference type="PDBsum" id="5ZEB"/>
<dbReference type="PDBsum" id="5ZEP"/>
<dbReference type="PDBsum" id="5ZET"/>
<dbReference type="PDBsum" id="6DZI"/>
<dbReference type="PDBsum" id="6DZP"/>
<dbReference type="PDBsum" id="7XAM"/>
<dbReference type="PDBsum" id="7Y41"/>
<dbReference type="PDBsum" id="8FR8"/>
<dbReference type="PDBsum" id="8KAB"/>
<dbReference type="PDBsum" id="8V9J"/>
<dbReference type="PDBsum" id="8V9K"/>
<dbReference type="PDBsum" id="8V9L"/>
<dbReference type="PDBsum" id="8VIO"/>
<dbReference type="PDBsum" id="8VK0"/>
<dbReference type="PDBsum" id="8VK7"/>
<dbReference type="PDBsum" id="8VKI"/>
<dbReference type="PDBsum" id="8VKW"/>
<dbReference type="PDBsum" id="8VR4"/>
<dbReference type="PDBsum" id="8VR8"/>
<dbReference type="PDBsum" id="8VRL"/>
<dbReference type="PDBsum" id="8WHX"/>
<dbReference type="PDBsum" id="8WHY"/>
<dbReference type="PDBsum" id="8WI7"/>
<dbReference type="PDBsum" id="8WI8"/>
<dbReference type="PDBsum" id="8WIB"/>
<dbReference type="PDBsum" id="8WIC"/>
<dbReference type="PDBsum" id="8XZ3"/>
<dbReference type="EMDB" id="EMD-29397"/>
<dbReference type="EMDB" id="EMD-33096"/>
<dbReference type="EMDB" id="EMD-33599"/>
<dbReference type="EMDB" id="EMD-37007"/>
<dbReference type="EMDB" id="EMD-3750"/>
<dbReference type="EMDB" id="EMD-3751"/>
<dbReference type="EMDB" id="EMD-37551"/>
<dbReference type="EMDB" id="EMD-37552"/>
<dbReference type="EMDB" id="EMD-37559"/>
<dbReference type="EMDB" id="EMD-37560"/>
<dbReference type="EMDB" id="EMD-37562"/>
<dbReference type="EMDB" id="EMD-37563"/>
<dbReference type="EMDB" id="EMD-38788"/>
<dbReference type="EMDB" id="EMD-43074"/>
<dbReference type="EMDB" id="EMD-43075"/>
<dbReference type="EMDB" id="EMD-43076"/>
<dbReference type="EMDB" id="EMD-43267"/>
<dbReference type="EMDB" id="EMD-43294"/>
<dbReference type="EMDB" id="EMD-43305"/>
<dbReference type="EMDB" id="EMD-43317"/>
<dbReference type="EMDB" id="EMD-43333"/>
<dbReference type="EMDB" id="EMD-43476"/>
<dbReference type="EMDB" id="EMD-43477"/>
<dbReference type="EMDB" id="EMD-43484"/>
<dbReference type="EMDB" id="EMD-6789"/>
<dbReference type="EMDB" id="EMD-6920"/>
<dbReference type="EMDB" id="EMD-6921"/>
<dbReference type="EMDB" id="EMD-6922"/>
<dbReference type="EMDB" id="EMD-8932"/>
<dbReference type="EMDB" id="EMD-8937"/>
<dbReference type="SMR" id="A0QSD6"/>
<dbReference type="IntAct" id="A0QSD6">
    <property type="interactions" value="2"/>
</dbReference>
<dbReference type="STRING" id="246196.MSMEG_1441"/>
<dbReference type="PaxDb" id="246196-MSMEI_1405"/>
<dbReference type="GeneID" id="93456285"/>
<dbReference type="KEGG" id="msb:LJ00_07190"/>
<dbReference type="KEGG" id="msg:MSMEI_1405"/>
<dbReference type="KEGG" id="msm:MSMEG_1441"/>
<dbReference type="PATRIC" id="fig|246196.19.peg.1427"/>
<dbReference type="eggNOG" id="COG0091">
    <property type="taxonomic scope" value="Bacteria"/>
</dbReference>
<dbReference type="OrthoDB" id="9805969at2"/>
<dbReference type="Proteomes" id="UP000000757">
    <property type="component" value="Chromosome"/>
</dbReference>
<dbReference type="Proteomes" id="UP000006158">
    <property type="component" value="Chromosome"/>
</dbReference>
<dbReference type="GO" id="GO:0022625">
    <property type="term" value="C:cytosolic large ribosomal subunit"/>
    <property type="evidence" value="ECO:0007669"/>
    <property type="project" value="TreeGrafter"/>
</dbReference>
<dbReference type="GO" id="GO:0019843">
    <property type="term" value="F:rRNA binding"/>
    <property type="evidence" value="ECO:0007669"/>
    <property type="project" value="UniProtKB-UniRule"/>
</dbReference>
<dbReference type="GO" id="GO:0003735">
    <property type="term" value="F:structural constituent of ribosome"/>
    <property type="evidence" value="ECO:0007669"/>
    <property type="project" value="InterPro"/>
</dbReference>
<dbReference type="GO" id="GO:0006412">
    <property type="term" value="P:translation"/>
    <property type="evidence" value="ECO:0007669"/>
    <property type="project" value="UniProtKB-UniRule"/>
</dbReference>
<dbReference type="CDD" id="cd00336">
    <property type="entry name" value="Ribosomal_L22"/>
    <property type="match status" value="1"/>
</dbReference>
<dbReference type="FunFam" id="3.90.470.10:FF:000002">
    <property type="entry name" value="50S ribosomal protein L22"/>
    <property type="match status" value="1"/>
</dbReference>
<dbReference type="Gene3D" id="3.90.470.10">
    <property type="entry name" value="Ribosomal protein L22/L17"/>
    <property type="match status" value="1"/>
</dbReference>
<dbReference type="HAMAP" id="MF_01331_B">
    <property type="entry name" value="Ribosomal_uL22_B"/>
    <property type="match status" value="1"/>
</dbReference>
<dbReference type="InterPro" id="IPR001063">
    <property type="entry name" value="Ribosomal_uL22"/>
</dbReference>
<dbReference type="InterPro" id="IPR005727">
    <property type="entry name" value="Ribosomal_uL22_bac/chlpt-type"/>
</dbReference>
<dbReference type="InterPro" id="IPR047867">
    <property type="entry name" value="Ribosomal_uL22_bac/org-type"/>
</dbReference>
<dbReference type="InterPro" id="IPR018260">
    <property type="entry name" value="Ribosomal_uL22_CS"/>
</dbReference>
<dbReference type="InterPro" id="IPR036394">
    <property type="entry name" value="Ribosomal_uL22_sf"/>
</dbReference>
<dbReference type="NCBIfam" id="TIGR01044">
    <property type="entry name" value="rplV_bact"/>
    <property type="match status" value="1"/>
</dbReference>
<dbReference type="PANTHER" id="PTHR13501">
    <property type="entry name" value="CHLOROPLAST 50S RIBOSOMAL PROTEIN L22-RELATED"/>
    <property type="match status" value="1"/>
</dbReference>
<dbReference type="PANTHER" id="PTHR13501:SF8">
    <property type="entry name" value="LARGE RIBOSOMAL SUBUNIT PROTEIN UL22M"/>
    <property type="match status" value="1"/>
</dbReference>
<dbReference type="Pfam" id="PF00237">
    <property type="entry name" value="Ribosomal_L22"/>
    <property type="match status" value="1"/>
</dbReference>
<dbReference type="SUPFAM" id="SSF54843">
    <property type="entry name" value="Ribosomal protein L22"/>
    <property type="match status" value="1"/>
</dbReference>
<dbReference type="PROSITE" id="PS00464">
    <property type="entry name" value="RIBOSOMAL_L22"/>
    <property type="match status" value="1"/>
</dbReference>
<organism>
    <name type="scientific">Mycolicibacterium smegmatis (strain ATCC 700084 / mc(2)155)</name>
    <name type="common">Mycobacterium smegmatis</name>
    <dbReference type="NCBI Taxonomy" id="246196"/>
    <lineage>
        <taxon>Bacteria</taxon>
        <taxon>Bacillati</taxon>
        <taxon>Actinomycetota</taxon>
        <taxon>Actinomycetes</taxon>
        <taxon>Mycobacteriales</taxon>
        <taxon>Mycobacteriaceae</taxon>
        <taxon>Mycolicibacterium</taxon>
    </lineage>
</organism>
<keyword id="KW-0002">3D-structure</keyword>
<keyword id="KW-1185">Reference proteome</keyword>
<keyword id="KW-0687">Ribonucleoprotein</keyword>
<keyword id="KW-0689">Ribosomal protein</keyword>
<keyword id="KW-0694">RNA-binding</keyword>
<keyword id="KW-0699">rRNA-binding</keyword>
<comment type="function">
    <text evidence="1">This protein binds specifically to 23S rRNA; its binding is stimulated by other ribosomal proteins, e.g. L4, L17, and L20. It is important during the early stages of 50S assembly. It makes multiple contacts with different domains of the 23S rRNA in the assembled 50S subunit and ribosome (By similarity).</text>
</comment>
<comment type="function">
    <text evidence="1">The globular domain of the protein is located near the polypeptide exit tunnel on the outside of the subunit, while an extended beta-hairpin is found that lines the wall of the exit tunnel in the center of the 70S ribosome.</text>
</comment>
<comment type="subunit">
    <text evidence="1">Part of the 50S ribosomal subunit.</text>
</comment>
<comment type="similarity">
    <text evidence="1">Belongs to the universal ribosomal protein uL22 family.</text>
</comment>
<reference key="1">
    <citation type="submission" date="2006-10" db="EMBL/GenBank/DDBJ databases">
        <authorList>
            <person name="Fleischmann R.D."/>
            <person name="Dodson R.J."/>
            <person name="Haft D.H."/>
            <person name="Merkel J.S."/>
            <person name="Nelson W.C."/>
            <person name="Fraser C.M."/>
        </authorList>
    </citation>
    <scope>NUCLEOTIDE SEQUENCE [LARGE SCALE GENOMIC DNA]</scope>
    <source>
        <strain>ATCC 700084 / mc(2)155</strain>
    </source>
</reference>
<reference key="2">
    <citation type="journal article" date="2007" name="Genome Biol.">
        <title>Interrupted coding sequences in Mycobacterium smegmatis: authentic mutations or sequencing errors?</title>
        <authorList>
            <person name="Deshayes C."/>
            <person name="Perrodou E."/>
            <person name="Gallien S."/>
            <person name="Euphrasie D."/>
            <person name="Schaeffer C."/>
            <person name="Van-Dorsselaer A."/>
            <person name="Poch O."/>
            <person name="Lecompte O."/>
            <person name="Reyrat J.-M."/>
        </authorList>
    </citation>
    <scope>NUCLEOTIDE SEQUENCE [LARGE SCALE GENOMIC DNA]</scope>
    <source>
        <strain>ATCC 700084 / mc(2)155</strain>
    </source>
</reference>
<reference key="3">
    <citation type="journal article" date="2009" name="Genome Res.">
        <title>Ortho-proteogenomics: multiple proteomes investigation through orthology and a new MS-based protocol.</title>
        <authorList>
            <person name="Gallien S."/>
            <person name="Perrodou E."/>
            <person name="Carapito C."/>
            <person name="Deshayes C."/>
            <person name="Reyrat J.-M."/>
            <person name="Van Dorsselaer A."/>
            <person name="Poch O."/>
            <person name="Schaeffer C."/>
            <person name="Lecompte O."/>
        </authorList>
    </citation>
    <scope>NUCLEOTIDE SEQUENCE [LARGE SCALE GENOMIC DNA]</scope>
    <scope>IDENTIFICATION BY MASS SPECTROMETRY [LARGE SCALE ANALYSIS]</scope>
    <scope>CLEAVAGE OF INITIATOR METHIONINE</scope>
    <source>
        <strain>ATCC 700084 / mc(2)155</strain>
    </source>
</reference>
<evidence type="ECO:0000255" key="1">
    <source>
        <dbReference type="HAMAP-Rule" id="MF_01331"/>
    </source>
</evidence>
<evidence type="ECO:0000256" key="2">
    <source>
        <dbReference type="SAM" id="MobiDB-lite"/>
    </source>
</evidence>
<evidence type="ECO:0000269" key="3">
    <source>
    </source>
</evidence>
<evidence type="ECO:0000305" key="4"/>
<evidence type="ECO:0007829" key="5">
    <source>
        <dbReference type="PDB" id="5O60"/>
    </source>
</evidence>
<evidence type="ECO:0007829" key="6">
    <source>
        <dbReference type="PDB" id="5XYM"/>
    </source>
</evidence>
<sequence length="153" mass="16324">MSTVTEFPSATAKARYVRVSATKARRVIDLVRGKSVEEALDILRWAPQAASEPVAKVIASAAANAQNNEGLDPSTLVVATVYADEGPTAKRIRPRAQGRAFRIRKRTSHITVIVESRPPKQKGASAASARSRRAQGSKAAATKKSAETKEGSE</sequence>
<feature type="initiator methionine" description="Removed" evidence="3">
    <location>
        <position position="1"/>
    </location>
</feature>
<feature type="chain" id="PRO_1000052612" description="Large ribosomal subunit protein uL22">
    <location>
        <begin position="2"/>
        <end position="153"/>
    </location>
</feature>
<feature type="region of interest" description="Disordered" evidence="2">
    <location>
        <begin position="110"/>
        <end position="153"/>
    </location>
</feature>
<feature type="compositionally biased region" description="Basic and acidic residues" evidence="2">
    <location>
        <begin position="144"/>
        <end position="153"/>
    </location>
</feature>
<feature type="strand" evidence="6">
    <location>
        <begin position="9"/>
        <end position="19"/>
    </location>
</feature>
<feature type="helix" evidence="6">
    <location>
        <begin position="24"/>
        <end position="31"/>
    </location>
</feature>
<feature type="helix" evidence="6">
    <location>
        <begin position="36"/>
        <end position="44"/>
    </location>
</feature>
<feature type="helix" evidence="6">
    <location>
        <begin position="51"/>
        <end position="67"/>
    </location>
</feature>
<feature type="strand" evidence="6">
    <location>
        <begin position="73"/>
        <end position="75"/>
    </location>
</feature>
<feature type="strand" evidence="6">
    <location>
        <begin position="77"/>
        <end position="85"/>
    </location>
</feature>
<feature type="helix" evidence="5">
    <location>
        <begin position="96"/>
        <end position="98"/>
    </location>
</feature>
<feature type="strand" evidence="6">
    <location>
        <begin position="108"/>
        <end position="115"/>
    </location>
</feature>
<proteinExistence type="evidence at protein level"/>
<name>RL22_MYCS2</name>
<protein>
    <recommendedName>
        <fullName evidence="1">Large ribosomal subunit protein uL22</fullName>
    </recommendedName>
    <alternativeName>
        <fullName evidence="4">50S ribosomal protein L22</fullName>
    </alternativeName>
</protein>